<dbReference type="EMBL" id="AY083329">
    <property type="protein sequence ID" value="AAM08688.1"/>
    <property type="molecule type" value="Genomic_DNA"/>
</dbReference>
<dbReference type="GO" id="GO:0005743">
    <property type="term" value="C:mitochondrial inner membrane"/>
    <property type="evidence" value="ECO:0007669"/>
    <property type="project" value="UniProtKB-SubCell"/>
</dbReference>
<dbReference type="GO" id="GO:0045275">
    <property type="term" value="C:respiratory chain complex III"/>
    <property type="evidence" value="ECO:0007669"/>
    <property type="project" value="InterPro"/>
</dbReference>
<dbReference type="GO" id="GO:0046872">
    <property type="term" value="F:metal ion binding"/>
    <property type="evidence" value="ECO:0007669"/>
    <property type="project" value="UniProtKB-KW"/>
</dbReference>
<dbReference type="GO" id="GO:0008121">
    <property type="term" value="F:ubiquinol-cytochrome-c reductase activity"/>
    <property type="evidence" value="ECO:0007669"/>
    <property type="project" value="InterPro"/>
</dbReference>
<dbReference type="GO" id="GO:0006122">
    <property type="term" value="P:mitochondrial electron transport, ubiquinol to cytochrome c"/>
    <property type="evidence" value="ECO:0007669"/>
    <property type="project" value="TreeGrafter"/>
</dbReference>
<dbReference type="CDD" id="cd00290">
    <property type="entry name" value="cytochrome_b_C"/>
    <property type="match status" value="1"/>
</dbReference>
<dbReference type="CDD" id="cd00284">
    <property type="entry name" value="Cytochrome_b_N"/>
    <property type="match status" value="1"/>
</dbReference>
<dbReference type="FunFam" id="1.20.810.10:FF:000002">
    <property type="entry name" value="Cytochrome b"/>
    <property type="match status" value="1"/>
</dbReference>
<dbReference type="Gene3D" id="1.20.810.10">
    <property type="entry name" value="Cytochrome Bc1 Complex, Chain C"/>
    <property type="match status" value="1"/>
</dbReference>
<dbReference type="InterPro" id="IPR005798">
    <property type="entry name" value="Cyt_b/b6_C"/>
</dbReference>
<dbReference type="InterPro" id="IPR036150">
    <property type="entry name" value="Cyt_b/b6_C_sf"/>
</dbReference>
<dbReference type="InterPro" id="IPR005797">
    <property type="entry name" value="Cyt_b/b6_N"/>
</dbReference>
<dbReference type="InterPro" id="IPR027387">
    <property type="entry name" value="Cytb/b6-like_sf"/>
</dbReference>
<dbReference type="InterPro" id="IPR030689">
    <property type="entry name" value="Cytochrome_b"/>
</dbReference>
<dbReference type="InterPro" id="IPR048260">
    <property type="entry name" value="Cytochrome_b_C_euk/bac"/>
</dbReference>
<dbReference type="InterPro" id="IPR048259">
    <property type="entry name" value="Cytochrome_b_N_euk/bac"/>
</dbReference>
<dbReference type="InterPro" id="IPR016174">
    <property type="entry name" value="Di-haem_cyt_TM"/>
</dbReference>
<dbReference type="PANTHER" id="PTHR19271">
    <property type="entry name" value="CYTOCHROME B"/>
    <property type="match status" value="1"/>
</dbReference>
<dbReference type="PANTHER" id="PTHR19271:SF16">
    <property type="entry name" value="CYTOCHROME B"/>
    <property type="match status" value="1"/>
</dbReference>
<dbReference type="Pfam" id="PF00032">
    <property type="entry name" value="Cytochrom_B_C"/>
    <property type="match status" value="1"/>
</dbReference>
<dbReference type="Pfam" id="PF00033">
    <property type="entry name" value="Cytochrome_B"/>
    <property type="match status" value="1"/>
</dbReference>
<dbReference type="PIRSF" id="PIRSF038885">
    <property type="entry name" value="COB"/>
    <property type="match status" value="1"/>
</dbReference>
<dbReference type="SUPFAM" id="SSF81648">
    <property type="entry name" value="a domain/subunit of cytochrome bc1 complex (Ubiquinol-cytochrome c reductase)"/>
    <property type="match status" value="1"/>
</dbReference>
<dbReference type="SUPFAM" id="SSF81342">
    <property type="entry name" value="Transmembrane di-heme cytochromes"/>
    <property type="match status" value="1"/>
</dbReference>
<dbReference type="PROSITE" id="PS51003">
    <property type="entry name" value="CYTB_CTER"/>
    <property type="match status" value="1"/>
</dbReference>
<dbReference type="PROSITE" id="PS51002">
    <property type="entry name" value="CYTB_NTER"/>
    <property type="match status" value="1"/>
</dbReference>
<sequence length="379" mass="42576">MTGMRXPHPLIKIINHSFIDLPAPSNISAWWNFGSLLGVCLALQIITGLFLAMHYTADTTTAFSSVTHICRDVNYGWLIRYAHANGASMFFIFLYFHIGRGIYYGSYSFTETWNIGIILLFAVMATAFMGYVLPWGQMSFWGATVITNLLSAIPYIGPSLVEWIWGGFSVDKATLTRFFAFHFILPFIITALVTIHLLFLHETGSNNPSGLNPNSDKIPFHPYYTIKDILGLLLMLLVLLSLTLFSPDLLGDPDNYTPANPLNTPPHIKPEWYFLFAYAILRSIPNKLGGVLALVFSILILTLFPTLHTSKQRSMTFRPLSQCLLWLLVANLIILTWIGGQPVESPFISIGQLASISYFSIILILMPTTSLMENKLLKW</sequence>
<geneLocation type="mitochondrion"/>
<comment type="function">
    <text evidence="2">Component of the ubiquinol-cytochrome c reductase complex (complex III or cytochrome b-c1 complex) that is part of the mitochondrial respiratory chain. The b-c1 complex mediates electron transfer from ubiquinol to cytochrome c. Contributes to the generation of a proton gradient across the mitochondrial membrane that is then used for ATP synthesis.</text>
</comment>
<comment type="cofactor">
    <cofactor evidence="2">
        <name>heme b</name>
        <dbReference type="ChEBI" id="CHEBI:60344"/>
    </cofactor>
    <text evidence="2">Binds 2 heme b groups non-covalently.</text>
</comment>
<comment type="subunit">
    <text evidence="2">The cytochrome bc1 complex contains 11 subunits: 3 respiratory subunits (MT-CYB, CYC1 and UQCRFS1), 2 core proteins (UQCRC1 and UQCRC2) and 6 low-molecular weight proteins (UQCRH/QCR6, UQCRB/QCR7, UQCRQ/QCR8, UQCR10/QCR9, UQCR11/QCR10 and a cleavage product of UQCRFS1). This cytochrome bc1 complex then forms a dimer.</text>
</comment>
<comment type="subcellular location">
    <subcellularLocation>
        <location evidence="2">Mitochondrion inner membrane</location>
        <topology evidence="2">Multi-pass membrane protein</topology>
    </subcellularLocation>
</comment>
<comment type="miscellaneous">
    <text evidence="1">Heme 1 (or BL or b562) is low-potential and absorbs at about 562 nm, and heme 2 (or BH or b566) is high-potential and absorbs at about 566 nm.</text>
</comment>
<comment type="similarity">
    <text evidence="3 4">Belongs to the cytochrome b family.</text>
</comment>
<comment type="caution">
    <text evidence="2">The full-length protein contains only eight transmembrane helices, not nine as predicted by bioinformatics tools.</text>
</comment>
<keyword id="KW-0249">Electron transport</keyword>
<keyword id="KW-0349">Heme</keyword>
<keyword id="KW-0408">Iron</keyword>
<keyword id="KW-0472">Membrane</keyword>
<keyword id="KW-0479">Metal-binding</keyword>
<keyword id="KW-0496">Mitochondrion</keyword>
<keyword id="KW-0999">Mitochondrion inner membrane</keyword>
<keyword id="KW-0679">Respiratory chain</keyword>
<keyword id="KW-0812">Transmembrane</keyword>
<keyword id="KW-1133">Transmembrane helix</keyword>
<keyword id="KW-0813">Transport</keyword>
<keyword id="KW-0830">Ubiquinone</keyword>
<evidence type="ECO:0000250" key="1"/>
<evidence type="ECO:0000250" key="2">
    <source>
        <dbReference type="UniProtKB" id="P00157"/>
    </source>
</evidence>
<evidence type="ECO:0000255" key="3">
    <source>
        <dbReference type="PROSITE-ProRule" id="PRU00967"/>
    </source>
</evidence>
<evidence type="ECO:0000255" key="4">
    <source>
        <dbReference type="PROSITE-ProRule" id="PRU00968"/>
    </source>
</evidence>
<reference key="1">
    <citation type="journal article" date="2004" name="J. Mammal.">
        <title>Molecular divergence in the genus Thrichomys (Rodentia, Echimyidae).</title>
        <authorList>
            <person name="Braggio E."/>
            <person name="Bonvicinoa C.R."/>
        </authorList>
    </citation>
    <scope>NUCLEOTIDE SEQUENCE [GENOMIC DNA]</scope>
</reference>
<proteinExistence type="inferred from homology"/>
<gene>
    <name type="primary">MT-CYB</name>
    <name type="synonym">COB</name>
    <name type="synonym">CYTB</name>
    <name type="synonym">MTCYB</name>
</gene>
<accession>Q85Q58</accession>
<protein>
    <recommendedName>
        <fullName>Cytochrome b</fullName>
    </recommendedName>
    <alternativeName>
        <fullName>Complex III subunit 3</fullName>
    </alternativeName>
    <alternativeName>
        <fullName>Complex III subunit III</fullName>
    </alternativeName>
    <alternativeName>
        <fullName>Cytochrome b-c1 complex subunit 3</fullName>
    </alternativeName>
    <alternativeName>
        <fullName>Ubiquinol-cytochrome-c reductase complex cytochrome b subunit</fullName>
    </alternativeName>
</protein>
<feature type="chain" id="PRO_0000255149" description="Cytochrome b">
    <location>
        <begin position="1"/>
        <end position="379"/>
    </location>
</feature>
<feature type="transmembrane region" description="Helical" evidence="2">
    <location>
        <begin position="33"/>
        <end position="53"/>
    </location>
</feature>
<feature type="transmembrane region" description="Helical" evidence="2">
    <location>
        <begin position="77"/>
        <end position="98"/>
    </location>
</feature>
<feature type="transmembrane region" description="Helical" evidence="2">
    <location>
        <begin position="113"/>
        <end position="133"/>
    </location>
</feature>
<feature type="transmembrane region" description="Helical" evidence="2">
    <location>
        <begin position="178"/>
        <end position="198"/>
    </location>
</feature>
<feature type="transmembrane region" description="Helical" evidence="2">
    <location>
        <begin position="226"/>
        <end position="246"/>
    </location>
</feature>
<feature type="transmembrane region" description="Helical" evidence="2">
    <location>
        <begin position="288"/>
        <end position="308"/>
    </location>
</feature>
<feature type="transmembrane region" description="Helical" evidence="2">
    <location>
        <begin position="320"/>
        <end position="340"/>
    </location>
</feature>
<feature type="transmembrane region" description="Helical" evidence="2">
    <location>
        <begin position="347"/>
        <end position="367"/>
    </location>
</feature>
<feature type="binding site" description="axial binding residue" evidence="2">
    <location>
        <position position="83"/>
    </location>
    <ligand>
        <name>heme b</name>
        <dbReference type="ChEBI" id="CHEBI:60344"/>
        <label>b562</label>
    </ligand>
    <ligandPart>
        <name>Fe</name>
        <dbReference type="ChEBI" id="CHEBI:18248"/>
    </ligandPart>
</feature>
<feature type="binding site" description="axial binding residue" evidence="2">
    <location>
        <position position="97"/>
    </location>
    <ligand>
        <name>heme b</name>
        <dbReference type="ChEBI" id="CHEBI:60344"/>
        <label>b566</label>
    </ligand>
    <ligandPart>
        <name>Fe</name>
        <dbReference type="ChEBI" id="CHEBI:18248"/>
    </ligandPart>
</feature>
<feature type="binding site" description="axial binding residue" evidence="2">
    <location>
        <position position="182"/>
    </location>
    <ligand>
        <name>heme b</name>
        <dbReference type="ChEBI" id="CHEBI:60344"/>
        <label>b562</label>
    </ligand>
    <ligandPart>
        <name>Fe</name>
        <dbReference type="ChEBI" id="CHEBI:18248"/>
    </ligandPart>
</feature>
<feature type="binding site" description="axial binding residue" evidence="2">
    <location>
        <position position="196"/>
    </location>
    <ligand>
        <name>heme b</name>
        <dbReference type="ChEBI" id="CHEBI:60344"/>
        <label>b566</label>
    </ligand>
    <ligandPart>
        <name>Fe</name>
        <dbReference type="ChEBI" id="CHEBI:18248"/>
    </ligandPart>
</feature>
<feature type="binding site" evidence="2">
    <location>
        <position position="201"/>
    </location>
    <ligand>
        <name>a ubiquinone</name>
        <dbReference type="ChEBI" id="CHEBI:16389"/>
    </ligand>
</feature>
<organism>
    <name type="scientific">Thrichomys pachyurus</name>
    <name type="common">Paraguayan punare</name>
    <dbReference type="NCBI Taxonomy" id="190473"/>
    <lineage>
        <taxon>Eukaryota</taxon>
        <taxon>Metazoa</taxon>
        <taxon>Chordata</taxon>
        <taxon>Craniata</taxon>
        <taxon>Vertebrata</taxon>
        <taxon>Euteleostomi</taxon>
        <taxon>Mammalia</taxon>
        <taxon>Eutheria</taxon>
        <taxon>Euarchontoglires</taxon>
        <taxon>Glires</taxon>
        <taxon>Rodentia</taxon>
        <taxon>Hystricomorpha</taxon>
        <taxon>Echimyidae</taxon>
        <taxon>Thrichomys</taxon>
    </lineage>
</organism>
<name>CYB_THRPA</name>